<feature type="initiator methionine" description="Removed" evidence="4">
    <location>
        <position position="1"/>
    </location>
</feature>
<feature type="chain" id="PRO_0000141078" description="Ribose-phosphate pyrophosphokinase 3">
    <location>
        <begin position="2"/>
        <end position="318"/>
    </location>
</feature>
<feature type="region of interest" description="Binding of phosphoribosylpyrophosphate" evidence="2">
    <location>
        <begin position="212"/>
        <end position="227"/>
    </location>
</feature>
<feature type="binding site" evidence="1">
    <location>
        <begin position="96"/>
        <end position="101"/>
    </location>
    <ligand>
        <name>ATP</name>
        <dbReference type="ChEBI" id="CHEBI:30616"/>
    </ligand>
</feature>
<feature type="binding site" evidence="2">
    <location>
        <position position="128"/>
    </location>
    <ligand>
        <name>Mg(2+)</name>
        <dbReference type="ChEBI" id="CHEBI:18420"/>
    </ligand>
</feature>
<feature type="binding site" evidence="1">
    <location>
        <position position="130"/>
    </location>
    <ligand>
        <name>ATP</name>
        <dbReference type="ChEBI" id="CHEBI:30616"/>
    </ligand>
</feature>
<feature type="binding site" evidence="2">
    <location>
        <position position="130"/>
    </location>
    <ligand>
        <name>Mg(2+)</name>
        <dbReference type="ChEBI" id="CHEBI:18420"/>
    </ligand>
</feature>
<feature type="binding site" evidence="2">
    <location>
        <position position="139"/>
    </location>
    <ligand>
        <name>Mg(2+)</name>
        <dbReference type="ChEBI" id="CHEBI:18420"/>
    </ligand>
</feature>
<feature type="binding site" evidence="2">
    <location>
        <position position="143"/>
    </location>
    <ligand>
        <name>Mg(2+)</name>
        <dbReference type="ChEBI" id="CHEBI:18420"/>
    </ligand>
</feature>
<feature type="sequence variant" id="VAR_050062" description="In dbSNP:rs3800962." evidence="3">
    <original>E</original>
    <variation>D</variation>
    <location>
        <position position="279"/>
    </location>
</feature>
<gene>
    <name type="primary">PRPS1L1</name>
    <name type="synonym">PRPS3</name>
    <name type="synonym">PRPSL</name>
</gene>
<organism>
    <name type="scientific">Homo sapiens</name>
    <name type="common">Human</name>
    <dbReference type="NCBI Taxonomy" id="9606"/>
    <lineage>
        <taxon>Eukaryota</taxon>
        <taxon>Metazoa</taxon>
        <taxon>Chordata</taxon>
        <taxon>Craniata</taxon>
        <taxon>Vertebrata</taxon>
        <taxon>Euteleostomi</taxon>
        <taxon>Mammalia</taxon>
        <taxon>Eutheria</taxon>
        <taxon>Euarchontoglires</taxon>
        <taxon>Primates</taxon>
        <taxon>Haplorrhini</taxon>
        <taxon>Catarrhini</taxon>
        <taxon>Hominidae</taxon>
        <taxon>Homo</taxon>
    </lineage>
</organism>
<dbReference type="EC" id="2.7.6.1"/>
<dbReference type="EMBL" id="M57423">
    <property type="protein sequence ID" value="AAB59463.1"/>
    <property type="molecule type" value="mRNA"/>
</dbReference>
<dbReference type="EMBL" id="BC062797">
    <property type="protein sequence ID" value="AAH62797.2"/>
    <property type="molecule type" value="mRNA"/>
</dbReference>
<dbReference type="CCDS" id="CCDS47552.1"/>
<dbReference type="PIR" id="A37893">
    <property type="entry name" value="KIHUR3"/>
</dbReference>
<dbReference type="RefSeq" id="NP_787082.1">
    <property type="nucleotide sequence ID" value="NM_175886.3"/>
</dbReference>
<dbReference type="SMR" id="P21108"/>
<dbReference type="BioGRID" id="128758">
    <property type="interactions" value="79"/>
</dbReference>
<dbReference type="FunCoup" id="P21108">
    <property type="interactions" value="326"/>
</dbReference>
<dbReference type="IntAct" id="P21108">
    <property type="interactions" value="20"/>
</dbReference>
<dbReference type="STRING" id="9606.ENSP00000424595"/>
<dbReference type="GlyGen" id="P21108">
    <property type="glycosylation" value="1 site, 1 O-linked glycan (1 site)"/>
</dbReference>
<dbReference type="iPTMnet" id="P21108"/>
<dbReference type="PhosphoSitePlus" id="P21108"/>
<dbReference type="SwissPalm" id="P21108"/>
<dbReference type="BioMuta" id="PRPS1L1"/>
<dbReference type="DMDM" id="125585"/>
<dbReference type="jPOST" id="P21108"/>
<dbReference type="MassIVE" id="P21108"/>
<dbReference type="PaxDb" id="9606-ENSP00000424595"/>
<dbReference type="PeptideAtlas" id="P21108"/>
<dbReference type="ProteomicsDB" id="53835"/>
<dbReference type="Antibodypedia" id="25318">
    <property type="antibodies" value="159 antibodies from 22 providers"/>
</dbReference>
<dbReference type="DNASU" id="221823"/>
<dbReference type="Ensembl" id="ENST00000506618.5">
    <property type="protein sequence ID" value="ENSP00000424595.3"/>
    <property type="gene ID" value="ENSG00000229937.9"/>
</dbReference>
<dbReference type="GeneID" id="221823"/>
<dbReference type="KEGG" id="hsa:221823"/>
<dbReference type="MANE-Select" id="ENST00000506618.5">
    <property type="protein sequence ID" value="ENSP00000424595.3"/>
    <property type="RefSeq nucleotide sequence ID" value="NM_175886.3"/>
    <property type="RefSeq protein sequence ID" value="NP_787082.1"/>
</dbReference>
<dbReference type="AGR" id="HGNC:9463"/>
<dbReference type="CTD" id="221823"/>
<dbReference type="DisGeNET" id="221823"/>
<dbReference type="GeneCards" id="PRPS1L1"/>
<dbReference type="HGNC" id="HGNC:9463">
    <property type="gene designation" value="PRPS1L1"/>
</dbReference>
<dbReference type="HPA" id="ENSG00000229937">
    <property type="expression patterns" value="Tissue enriched (testis)"/>
</dbReference>
<dbReference type="MIM" id="611566">
    <property type="type" value="gene"/>
</dbReference>
<dbReference type="neXtProt" id="NX_P21108"/>
<dbReference type="OpenTargets" id="ENSG00000229937"/>
<dbReference type="PharmGKB" id="PA33818"/>
<dbReference type="VEuPathDB" id="HostDB:ENSG00000229937"/>
<dbReference type="eggNOG" id="KOG1448">
    <property type="taxonomic scope" value="Eukaryota"/>
</dbReference>
<dbReference type="GeneTree" id="ENSGT00950000182803"/>
<dbReference type="InParanoid" id="P21108"/>
<dbReference type="OMA" id="WIMENIS"/>
<dbReference type="OrthoDB" id="9473042at2759"/>
<dbReference type="PAN-GO" id="P21108">
    <property type="GO annotations" value="6 GO annotations based on evolutionary models"/>
</dbReference>
<dbReference type="PhylomeDB" id="P21108"/>
<dbReference type="BioCyc" id="MetaCyc:HS11931-MONOMER"/>
<dbReference type="PathwayCommons" id="P21108"/>
<dbReference type="Reactome" id="R-HSA-73843">
    <property type="pathway name" value="5-Phosphoribose 1-diphosphate biosynthesis"/>
</dbReference>
<dbReference type="SignaLink" id="P21108"/>
<dbReference type="UniPathway" id="UPA00087">
    <property type="reaction ID" value="UER00172"/>
</dbReference>
<dbReference type="BioGRID-ORCS" id="221823">
    <property type="hits" value="5 hits in 1057 CRISPR screens"/>
</dbReference>
<dbReference type="CD-CODE" id="91857CE7">
    <property type="entry name" value="Nucleolus"/>
</dbReference>
<dbReference type="GenomeRNAi" id="221823"/>
<dbReference type="Pharos" id="P21108">
    <property type="development level" value="Tdark"/>
</dbReference>
<dbReference type="PRO" id="PR:P21108"/>
<dbReference type="Proteomes" id="UP000005640">
    <property type="component" value="Chromosome 7"/>
</dbReference>
<dbReference type="RNAct" id="P21108">
    <property type="molecule type" value="protein"/>
</dbReference>
<dbReference type="Bgee" id="ENSG00000229937">
    <property type="expression patterns" value="Expressed in sperm and 25 other cell types or tissues"/>
</dbReference>
<dbReference type="ExpressionAtlas" id="P21108">
    <property type="expression patterns" value="baseline and differential"/>
</dbReference>
<dbReference type="GO" id="GO:0005737">
    <property type="term" value="C:cytoplasm"/>
    <property type="evidence" value="ECO:0000318"/>
    <property type="project" value="GO_Central"/>
</dbReference>
<dbReference type="GO" id="GO:0002189">
    <property type="term" value="C:ribose phosphate diphosphokinase complex"/>
    <property type="evidence" value="ECO:0000318"/>
    <property type="project" value="GO_Central"/>
</dbReference>
<dbReference type="GO" id="GO:0005524">
    <property type="term" value="F:ATP binding"/>
    <property type="evidence" value="ECO:0000250"/>
    <property type="project" value="UniProtKB"/>
</dbReference>
<dbReference type="GO" id="GO:0016301">
    <property type="term" value="F:kinase activity"/>
    <property type="evidence" value="ECO:0007669"/>
    <property type="project" value="UniProtKB-KW"/>
</dbReference>
<dbReference type="GO" id="GO:0000287">
    <property type="term" value="F:magnesium ion binding"/>
    <property type="evidence" value="ECO:0007669"/>
    <property type="project" value="InterPro"/>
</dbReference>
<dbReference type="GO" id="GO:0042803">
    <property type="term" value="F:protein homodimerization activity"/>
    <property type="evidence" value="ECO:0000250"/>
    <property type="project" value="UniProtKB"/>
</dbReference>
<dbReference type="GO" id="GO:0004749">
    <property type="term" value="F:ribose phosphate diphosphokinase activity"/>
    <property type="evidence" value="ECO:0000250"/>
    <property type="project" value="UniProtKB"/>
</dbReference>
<dbReference type="GO" id="GO:0006015">
    <property type="term" value="P:5-phosphoribose 1-diphosphate biosynthetic process"/>
    <property type="evidence" value="ECO:0000318"/>
    <property type="project" value="GO_Central"/>
</dbReference>
<dbReference type="GO" id="GO:0008584">
    <property type="term" value="P:male gonad development"/>
    <property type="evidence" value="ECO:0007669"/>
    <property type="project" value="Ensembl"/>
</dbReference>
<dbReference type="GO" id="GO:0006164">
    <property type="term" value="P:purine nucleotide biosynthetic process"/>
    <property type="evidence" value="ECO:0000318"/>
    <property type="project" value="GO_Central"/>
</dbReference>
<dbReference type="GO" id="GO:0009156">
    <property type="term" value="P:ribonucleoside monophosphate biosynthetic process"/>
    <property type="evidence" value="ECO:0007669"/>
    <property type="project" value="InterPro"/>
</dbReference>
<dbReference type="CDD" id="cd06223">
    <property type="entry name" value="PRTases_typeI"/>
    <property type="match status" value="1"/>
</dbReference>
<dbReference type="FunFam" id="3.40.50.2020:FF:000031">
    <property type="entry name" value="Probable PRS4-ribose-phosphate pyrophosphokinase 3"/>
    <property type="match status" value="1"/>
</dbReference>
<dbReference type="FunFam" id="3.40.50.2020:FF:000005">
    <property type="entry name" value="Ribose-phosphate pyrophosphokinase 1"/>
    <property type="match status" value="1"/>
</dbReference>
<dbReference type="Gene3D" id="3.40.50.2020">
    <property type="match status" value="2"/>
</dbReference>
<dbReference type="HAMAP" id="MF_00583_B">
    <property type="entry name" value="RibP_PPkinase_B"/>
    <property type="match status" value="1"/>
</dbReference>
<dbReference type="InterPro" id="IPR000842">
    <property type="entry name" value="PRib_PP_synth_CS"/>
</dbReference>
<dbReference type="InterPro" id="IPR029099">
    <property type="entry name" value="Pribosyltran_N"/>
</dbReference>
<dbReference type="InterPro" id="IPR000836">
    <property type="entry name" value="PRibTrfase_dom"/>
</dbReference>
<dbReference type="InterPro" id="IPR029057">
    <property type="entry name" value="PRTase-like"/>
</dbReference>
<dbReference type="InterPro" id="IPR005946">
    <property type="entry name" value="Rib-P_diPkinase"/>
</dbReference>
<dbReference type="InterPro" id="IPR037515">
    <property type="entry name" value="Rib-P_diPkinase_bac"/>
</dbReference>
<dbReference type="NCBIfam" id="NF002320">
    <property type="entry name" value="PRK01259.1"/>
    <property type="match status" value="1"/>
</dbReference>
<dbReference type="NCBIfam" id="TIGR01251">
    <property type="entry name" value="ribP_PPkin"/>
    <property type="match status" value="1"/>
</dbReference>
<dbReference type="PANTHER" id="PTHR10210">
    <property type="entry name" value="RIBOSE-PHOSPHATE DIPHOSPHOKINASE FAMILY MEMBER"/>
    <property type="match status" value="1"/>
</dbReference>
<dbReference type="PANTHER" id="PTHR10210:SF112">
    <property type="entry name" value="RIBOSE-PHOSPHATE PYROPHOSPHOKINASE 3"/>
    <property type="match status" value="1"/>
</dbReference>
<dbReference type="Pfam" id="PF14572">
    <property type="entry name" value="Pribosyl_synth"/>
    <property type="match status" value="1"/>
</dbReference>
<dbReference type="Pfam" id="PF13793">
    <property type="entry name" value="Pribosyltran_N"/>
    <property type="match status" value="1"/>
</dbReference>
<dbReference type="SMART" id="SM01400">
    <property type="entry name" value="Pribosyltran_N"/>
    <property type="match status" value="1"/>
</dbReference>
<dbReference type="SUPFAM" id="SSF53271">
    <property type="entry name" value="PRTase-like"/>
    <property type="match status" value="1"/>
</dbReference>
<dbReference type="PROSITE" id="PS00114">
    <property type="entry name" value="PRPP_SYNTHASE"/>
    <property type="match status" value="1"/>
</dbReference>
<accession>P21108</accession>
<accession>Q6P5P6</accession>
<protein>
    <recommendedName>
        <fullName>Ribose-phosphate pyrophosphokinase 3</fullName>
        <ecNumber>2.7.6.1</ecNumber>
    </recommendedName>
    <alternativeName>
        <fullName>Phosphoribosyl pyrophosphate synthase 1-like 1</fullName>
        <shortName>PRPS1-like 1</shortName>
    </alternativeName>
    <alternativeName>
        <fullName>Phosphoribosyl pyrophosphate synthase III</fullName>
        <shortName>PRS-III</shortName>
    </alternativeName>
</protein>
<proteinExistence type="evidence at protein level"/>
<name>PRPS3_HUMAN</name>
<keyword id="KW-0067">ATP-binding</keyword>
<keyword id="KW-0903">Direct protein sequencing</keyword>
<keyword id="KW-0418">Kinase</keyword>
<keyword id="KW-0460">Magnesium</keyword>
<keyword id="KW-0479">Metal-binding</keyword>
<keyword id="KW-0545">Nucleotide biosynthesis</keyword>
<keyword id="KW-0547">Nucleotide-binding</keyword>
<keyword id="KW-1267">Proteomics identification</keyword>
<keyword id="KW-1185">Reference proteome</keyword>
<keyword id="KW-0808">Transferase</keyword>
<reference key="1">
    <citation type="journal article" date="1990" name="J. Biol. Chem.">
        <title>A human testis-specific mRNA for phosphoribosylpyrophosphate synthetase that initiates from a non-AUG codon.</title>
        <authorList>
            <person name="Taira M."/>
            <person name="Iizasa T."/>
            <person name="Shimada H."/>
            <person name="Kudoh J."/>
            <person name="Shimizu N."/>
            <person name="Tatibana M."/>
        </authorList>
    </citation>
    <scope>NUCLEOTIDE SEQUENCE [MRNA]</scope>
    <scope>PROTEIN SEQUENCE OF 2-11</scope>
    <source>
        <tissue>Testis</tissue>
    </source>
</reference>
<reference key="2">
    <citation type="journal article" date="2004" name="Genome Res.">
        <title>The status, quality, and expansion of the NIH full-length cDNA project: the Mammalian Gene Collection (MGC).</title>
        <authorList>
            <consortium name="The MGC Project Team"/>
        </authorList>
    </citation>
    <scope>NUCLEOTIDE SEQUENCE [LARGE SCALE MRNA]</scope>
    <scope>VARIANT ASP-279</scope>
    <source>
        <tissue>Testis</tissue>
    </source>
</reference>
<sequence>MPNIKIFSGSSHQDLSQKIADRLGLELGKVVTKKFSNQETCVEIDESVRGEDVYIVQSGCGEINDSLMELLIMINACKIASASRVTAVIPCFPYARQDKKDKSRSPISAKLVANMLSIAGADHIITMDLHASQIQGFFDIPVDNLYAEPTVLKWIRENIPEWKNCIIVSPDAGGAKRVTSIADQLNVDFALIHKERKKANEVDCIVLVGDVNDRVAILVDDMADTCVTICLAADKLLSAGATRVYAILTHGIFSGPAISRINTACFEAVVVTNTIPQDEKMKHCSKIRVIDISMILAEAIRRTHNGESVSYLFSHVPL</sequence>
<comment type="function">
    <text>Catalyzes the synthesis of phosphoribosylpyrophosphate (PRPP) that is essential for nucleotide synthesis.</text>
</comment>
<comment type="catalytic activity">
    <reaction>
        <text>D-ribose 5-phosphate + ATP = 5-phospho-alpha-D-ribose 1-diphosphate + AMP + H(+)</text>
        <dbReference type="Rhea" id="RHEA:15609"/>
        <dbReference type="ChEBI" id="CHEBI:15378"/>
        <dbReference type="ChEBI" id="CHEBI:30616"/>
        <dbReference type="ChEBI" id="CHEBI:58017"/>
        <dbReference type="ChEBI" id="CHEBI:78346"/>
        <dbReference type="ChEBI" id="CHEBI:456215"/>
        <dbReference type="EC" id="2.7.6.1"/>
    </reaction>
</comment>
<comment type="cofactor">
    <cofactor>
        <name>Mg(2+)</name>
        <dbReference type="ChEBI" id="CHEBI:18420"/>
    </cofactor>
</comment>
<comment type="activity regulation">
    <text>Activated by magnesium and inorganic phosphate.</text>
</comment>
<comment type="pathway">
    <text>Metabolic intermediate biosynthesis; 5-phospho-alpha-D-ribose 1-diphosphate biosynthesis; 5-phospho-alpha-D-ribose 1-diphosphate from D-ribose 5-phosphate (route I): step 1/1.</text>
</comment>
<comment type="subunit">
    <text evidence="1">Homodimer. The active form is probably a hexamer composed of 3 homodimers (By similarity).</text>
</comment>
<comment type="tissue specificity">
    <text>Testis.</text>
</comment>
<comment type="similarity">
    <text evidence="5">Belongs to the ribose-phosphate pyrophosphokinase family.</text>
</comment>
<comment type="caution">
    <text evidence="5">According to PubMed:2168892, this sequence initiates from a non-AUG codon; N-terminal ACG codon did serve as a start codon.</text>
</comment>
<evidence type="ECO:0000250" key="1"/>
<evidence type="ECO:0000255" key="2"/>
<evidence type="ECO:0000269" key="3">
    <source>
    </source>
</evidence>
<evidence type="ECO:0000269" key="4">
    <source>
    </source>
</evidence>
<evidence type="ECO:0000305" key="5"/>